<dbReference type="EMBL" id="BC123636">
    <property type="protein sequence ID" value="AAI23637.1"/>
    <property type="molecule type" value="mRNA"/>
</dbReference>
<dbReference type="RefSeq" id="NP_001071566.1">
    <property type="nucleotide sequence ID" value="NM_001078098.1"/>
</dbReference>
<dbReference type="RefSeq" id="XP_059743652.1">
    <property type="nucleotide sequence ID" value="XM_059887669.1"/>
</dbReference>
<dbReference type="FunCoup" id="Q08DP3">
    <property type="interactions" value="319"/>
</dbReference>
<dbReference type="STRING" id="9913.ENSBTAP00000005668"/>
<dbReference type="PaxDb" id="9913-ENSBTAP00000005668"/>
<dbReference type="Ensembl" id="ENSBTAT00000005668.5">
    <property type="protein sequence ID" value="ENSBTAP00000005668.4"/>
    <property type="gene ID" value="ENSBTAG00000004329.6"/>
</dbReference>
<dbReference type="GeneID" id="768210"/>
<dbReference type="KEGG" id="bta:768210"/>
<dbReference type="CTD" id="768211"/>
<dbReference type="VEuPathDB" id="HostDB:ENSBTAG00000004329"/>
<dbReference type="VGNC" id="VGNC:33860">
    <property type="gene designation" value="RELL1"/>
</dbReference>
<dbReference type="eggNOG" id="ENOG502R0TD">
    <property type="taxonomic scope" value="Eukaryota"/>
</dbReference>
<dbReference type="GeneTree" id="ENSGT00940000159709"/>
<dbReference type="HOGENOM" id="CLU_084225_0_0_1"/>
<dbReference type="InParanoid" id="Q08DP3"/>
<dbReference type="OMA" id="NICTRCS"/>
<dbReference type="OrthoDB" id="9353106at2759"/>
<dbReference type="TreeFam" id="TF332339"/>
<dbReference type="Proteomes" id="UP000009136">
    <property type="component" value="Chromosome 6"/>
</dbReference>
<dbReference type="Bgee" id="ENSBTAG00000004329">
    <property type="expression patterns" value="Expressed in abomasum and 102 other cell types or tissues"/>
</dbReference>
<dbReference type="GO" id="GO:0015630">
    <property type="term" value="C:microtubule cytoskeleton"/>
    <property type="evidence" value="ECO:0007669"/>
    <property type="project" value="Ensembl"/>
</dbReference>
<dbReference type="GO" id="GO:0005886">
    <property type="term" value="C:plasma membrane"/>
    <property type="evidence" value="ECO:0000318"/>
    <property type="project" value="GO_Central"/>
</dbReference>
<dbReference type="GO" id="GO:1900745">
    <property type="term" value="P:positive regulation of p38MAPK cascade"/>
    <property type="evidence" value="ECO:0000250"/>
    <property type="project" value="UniProtKB"/>
</dbReference>
<dbReference type="InterPro" id="IPR042315">
    <property type="entry name" value="RELL1"/>
</dbReference>
<dbReference type="InterPro" id="IPR022248">
    <property type="entry name" value="TNF_rcpt_RELT"/>
</dbReference>
<dbReference type="PANTHER" id="PTHR31037:SF1">
    <property type="entry name" value="RELT-LIKE PROTEIN 1"/>
    <property type="match status" value="1"/>
</dbReference>
<dbReference type="PANTHER" id="PTHR31037">
    <property type="entry name" value="RELT-LIKE PROTEIN 1-RELATED"/>
    <property type="match status" value="1"/>
</dbReference>
<dbReference type="Pfam" id="PF12606">
    <property type="entry name" value="RELT"/>
    <property type="match status" value="1"/>
</dbReference>
<name>RELL1_BOVIN</name>
<gene>
    <name type="primary">RELL1</name>
</gene>
<evidence type="ECO:0000250" key="1">
    <source>
        <dbReference type="UniProtKB" id="Q8IUW5"/>
    </source>
</evidence>
<evidence type="ECO:0000255" key="2"/>
<evidence type="ECO:0000256" key="3">
    <source>
        <dbReference type="SAM" id="MobiDB-lite"/>
    </source>
</evidence>
<evidence type="ECO:0000305" key="4"/>
<proteinExistence type="evidence at transcript level"/>
<keyword id="KW-1003">Cell membrane</keyword>
<keyword id="KW-0472">Membrane</keyword>
<keyword id="KW-0597">Phosphoprotein</keyword>
<keyword id="KW-1185">Reference proteome</keyword>
<keyword id="KW-0732">Signal</keyword>
<keyword id="KW-0812">Transmembrane</keyword>
<keyword id="KW-1133">Transmembrane helix</keyword>
<comment type="function">
    <text evidence="1">Induces activation of MAPK14/p38 cascade, when overexpressed. Induces apoptosis, when overexpressed.</text>
</comment>
<comment type="subunit">
    <text evidence="1">Interacts with RELT, RELL2, OXSR1 and PLSCR1.</text>
</comment>
<comment type="subcellular location">
    <subcellularLocation>
        <location evidence="1">Cell membrane</location>
        <topology evidence="1">Single-pass type I membrane protein</topology>
    </subcellularLocation>
</comment>
<comment type="similarity">
    <text evidence="4">Belongs to the RELT family.</text>
</comment>
<accession>Q08DP3</accession>
<protein>
    <recommendedName>
        <fullName>RELT-like protein 1</fullName>
    </recommendedName>
</protein>
<organism>
    <name type="scientific">Bos taurus</name>
    <name type="common">Bovine</name>
    <dbReference type="NCBI Taxonomy" id="9913"/>
    <lineage>
        <taxon>Eukaryota</taxon>
        <taxon>Metazoa</taxon>
        <taxon>Chordata</taxon>
        <taxon>Craniata</taxon>
        <taxon>Vertebrata</taxon>
        <taxon>Euteleostomi</taxon>
        <taxon>Mammalia</taxon>
        <taxon>Eutheria</taxon>
        <taxon>Laurasiatheria</taxon>
        <taxon>Artiodactyla</taxon>
        <taxon>Ruminantia</taxon>
        <taxon>Pecora</taxon>
        <taxon>Bovidae</taxon>
        <taxon>Bovinae</taxon>
        <taxon>Bos</taxon>
    </lineage>
</organism>
<reference key="1">
    <citation type="submission" date="2006-09" db="EMBL/GenBank/DDBJ databases">
        <authorList>
            <consortium name="NIH - Mammalian Gene Collection (MGC) project"/>
        </authorList>
    </citation>
    <scope>NUCLEOTIDE SEQUENCE [LARGE SCALE MRNA]</scope>
    <source>
        <strain>Hereford</strain>
        <tissue>Fetal muscle</tissue>
    </source>
</reference>
<sequence>MAPRGLPGSAVLAAAVFVGGAVSSPLVRSDHSGSHPLPSKTETTPSPTNNNGNGHPEYIAYALVPVFFVMGLFGVLICHLLKKKGYRCTTEAEQDVEGEKVEKIELNDSVNENSDTVGQIVQYIMKNEANVDILAAMVEDNNVCDPESPVTPSTPGSPPVSPGPLSPGVTPGKHICGHHLHTVGGPVERDVCHRCRHKRWHFIKPTNKSKEGRPRRQGEVTVLSVGRFRVTKVEPKSNQKERRSLMSVSGTDSVNGEVPVTPVKRQQSDSE</sequence>
<feature type="signal peptide" evidence="2">
    <location>
        <begin position="1"/>
        <end position="23"/>
    </location>
</feature>
<feature type="chain" id="PRO_0000323589" description="RELT-like protein 1">
    <location>
        <begin position="24"/>
        <end position="271"/>
    </location>
</feature>
<feature type="topological domain" description="Extracellular" evidence="2">
    <location>
        <begin position="24"/>
        <end position="57"/>
    </location>
</feature>
<feature type="transmembrane region" description="Helical" evidence="2">
    <location>
        <begin position="58"/>
        <end position="78"/>
    </location>
</feature>
<feature type="topological domain" description="Cytoplasmic" evidence="2">
    <location>
        <begin position="79"/>
        <end position="271"/>
    </location>
</feature>
<feature type="region of interest" description="Disordered" evidence="3">
    <location>
        <begin position="27"/>
        <end position="52"/>
    </location>
</feature>
<feature type="region of interest" description="Disordered" evidence="3">
    <location>
        <begin position="144"/>
        <end position="168"/>
    </location>
</feature>
<feature type="region of interest" description="Disordered" evidence="3">
    <location>
        <begin position="231"/>
        <end position="271"/>
    </location>
</feature>
<feature type="compositionally biased region" description="Low complexity" evidence="3">
    <location>
        <begin position="36"/>
        <end position="52"/>
    </location>
</feature>
<feature type="compositionally biased region" description="Pro residues" evidence="3">
    <location>
        <begin position="155"/>
        <end position="165"/>
    </location>
</feature>
<feature type="compositionally biased region" description="Basic and acidic residues" evidence="3">
    <location>
        <begin position="231"/>
        <end position="244"/>
    </location>
</feature>
<feature type="modified residue" description="Phosphoserine" evidence="1">
    <location>
        <position position="109"/>
    </location>
</feature>
<feature type="modified residue" description="Phosphoserine" evidence="1">
    <location>
        <position position="114"/>
    </location>
</feature>
<feature type="modified residue" description="Phosphoserine" evidence="1">
    <location>
        <position position="244"/>
    </location>
</feature>
<feature type="modified residue" description="Phosphoserine" evidence="1">
    <location>
        <position position="247"/>
    </location>
</feature>